<feature type="chain" id="PRO_1000023681" description="Peptide chain release factor 3">
    <location>
        <begin position="1"/>
        <end position="528"/>
    </location>
</feature>
<feature type="domain" description="tr-type G">
    <location>
        <begin position="11"/>
        <end position="279"/>
    </location>
</feature>
<feature type="binding site" evidence="1">
    <location>
        <begin position="20"/>
        <end position="27"/>
    </location>
    <ligand>
        <name>GTP</name>
        <dbReference type="ChEBI" id="CHEBI:37565"/>
    </ligand>
</feature>
<feature type="binding site" evidence="1">
    <location>
        <begin position="88"/>
        <end position="92"/>
    </location>
    <ligand>
        <name>GTP</name>
        <dbReference type="ChEBI" id="CHEBI:37565"/>
    </ligand>
</feature>
<feature type="binding site" evidence="1">
    <location>
        <begin position="142"/>
        <end position="145"/>
    </location>
    <ligand>
        <name>GTP</name>
        <dbReference type="ChEBI" id="CHEBI:37565"/>
    </ligand>
</feature>
<sequence length="528" mass="59601">MANQDFLNEINKRRTFAIISHPDAGKTTITEKVLLFGNALQKAGTVKGKKSGQHAKSDWMEMEKDRGISITTSVMQFPYGGALVNLLDTPGHEDFSEDTYRTLTAVDSCLMVIDSAKGVEDRTIKLMEVTRLRDTPIVTFMNKLDRDIRDPIDLMDEVENVLNIACAPITWPIGSGKEFKGVYHILRDEVVLYQSGMGHTIQERRVIEGINNPDLDKAIGSYAADLRDEMELVRGASNEFDHAAFLKGELTPVFFGTALGNFGVDHILDGIVEWAPKPLPRESDTRVIMPDEEKFTGFVFKIQANMDPKHRDRVAFMRVCSGRYEQGMKMHHVRIGKDVNVSDALTFMAGDRERAEEAYPGDIIGLHNHGTIRIGDTFTQGEKFRFTGVPNFAPEMFRRIRLRDPLKQKQLLKGLVQLSEEGAVQVFRPLDTNDLIVGAVGVLQFEVVVGRLKSEYNVEAIYEGISVSTARWVYCKDERKLEEFRRKCSQNLALDGGDNLTYIAPTMVNLNLSMERYPDIEFAKTREH</sequence>
<reference key="1">
    <citation type="submission" date="2006-12" db="EMBL/GenBank/DDBJ databases">
        <title>Complete sequence of Shewanella sp. W3-18-1.</title>
        <authorList>
            <consortium name="US DOE Joint Genome Institute"/>
            <person name="Copeland A."/>
            <person name="Lucas S."/>
            <person name="Lapidus A."/>
            <person name="Barry K."/>
            <person name="Detter J.C."/>
            <person name="Glavina del Rio T."/>
            <person name="Hammon N."/>
            <person name="Israni S."/>
            <person name="Dalin E."/>
            <person name="Tice H."/>
            <person name="Pitluck S."/>
            <person name="Chain P."/>
            <person name="Malfatti S."/>
            <person name="Shin M."/>
            <person name="Vergez L."/>
            <person name="Schmutz J."/>
            <person name="Larimer F."/>
            <person name="Land M."/>
            <person name="Hauser L."/>
            <person name="Kyrpides N."/>
            <person name="Lykidis A."/>
            <person name="Tiedje J."/>
            <person name="Richardson P."/>
        </authorList>
    </citation>
    <scope>NUCLEOTIDE SEQUENCE [LARGE SCALE GENOMIC DNA]</scope>
    <source>
        <strain>W3-18-1</strain>
    </source>
</reference>
<accession>A1RH82</accession>
<gene>
    <name evidence="1" type="primary">prfC</name>
    <name type="ordered locus">Sputw3181_1184</name>
</gene>
<name>RF3_SHESW</name>
<organism>
    <name type="scientific">Shewanella sp. (strain W3-18-1)</name>
    <dbReference type="NCBI Taxonomy" id="351745"/>
    <lineage>
        <taxon>Bacteria</taxon>
        <taxon>Pseudomonadati</taxon>
        <taxon>Pseudomonadota</taxon>
        <taxon>Gammaproteobacteria</taxon>
        <taxon>Alteromonadales</taxon>
        <taxon>Shewanellaceae</taxon>
        <taxon>Shewanella</taxon>
    </lineage>
</organism>
<evidence type="ECO:0000255" key="1">
    <source>
        <dbReference type="HAMAP-Rule" id="MF_00072"/>
    </source>
</evidence>
<comment type="function">
    <text evidence="1">Increases the formation of ribosomal termination complexes and stimulates activities of RF-1 and RF-2. It binds guanine nucleotides and has strong preference for UGA stop codons. It may interact directly with the ribosome. The stimulation of RF-1 and RF-2 is significantly reduced by GTP and GDP, but not by GMP.</text>
</comment>
<comment type="subcellular location">
    <subcellularLocation>
        <location evidence="1">Cytoplasm</location>
    </subcellularLocation>
</comment>
<comment type="similarity">
    <text evidence="1">Belongs to the TRAFAC class translation factor GTPase superfamily. Classic translation factor GTPase family. PrfC subfamily.</text>
</comment>
<proteinExistence type="inferred from homology"/>
<dbReference type="EMBL" id="CP000503">
    <property type="protein sequence ID" value="ABM24027.1"/>
    <property type="molecule type" value="Genomic_DNA"/>
</dbReference>
<dbReference type="RefSeq" id="WP_011788535.1">
    <property type="nucleotide sequence ID" value="NC_008750.1"/>
</dbReference>
<dbReference type="SMR" id="A1RH82"/>
<dbReference type="KEGG" id="shw:Sputw3181_1184"/>
<dbReference type="HOGENOM" id="CLU_002794_2_1_6"/>
<dbReference type="Proteomes" id="UP000002597">
    <property type="component" value="Chromosome"/>
</dbReference>
<dbReference type="GO" id="GO:0005829">
    <property type="term" value="C:cytosol"/>
    <property type="evidence" value="ECO:0007669"/>
    <property type="project" value="TreeGrafter"/>
</dbReference>
<dbReference type="GO" id="GO:0005525">
    <property type="term" value="F:GTP binding"/>
    <property type="evidence" value="ECO:0007669"/>
    <property type="project" value="UniProtKB-UniRule"/>
</dbReference>
<dbReference type="GO" id="GO:0003924">
    <property type="term" value="F:GTPase activity"/>
    <property type="evidence" value="ECO:0007669"/>
    <property type="project" value="InterPro"/>
</dbReference>
<dbReference type="GO" id="GO:0097216">
    <property type="term" value="F:guanosine tetraphosphate binding"/>
    <property type="evidence" value="ECO:0007669"/>
    <property type="project" value="UniProtKB-ARBA"/>
</dbReference>
<dbReference type="GO" id="GO:0016150">
    <property type="term" value="F:translation release factor activity, codon nonspecific"/>
    <property type="evidence" value="ECO:0007669"/>
    <property type="project" value="TreeGrafter"/>
</dbReference>
<dbReference type="GO" id="GO:0016149">
    <property type="term" value="F:translation release factor activity, codon specific"/>
    <property type="evidence" value="ECO:0007669"/>
    <property type="project" value="UniProtKB-UniRule"/>
</dbReference>
<dbReference type="GO" id="GO:0006449">
    <property type="term" value="P:regulation of translational termination"/>
    <property type="evidence" value="ECO:0007669"/>
    <property type="project" value="UniProtKB-UniRule"/>
</dbReference>
<dbReference type="CDD" id="cd04169">
    <property type="entry name" value="RF3"/>
    <property type="match status" value="1"/>
</dbReference>
<dbReference type="CDD" id="cd03689">
    <property type="entry name" value="RF3_II"/>
    <property type="match status" value="1"/>
</dbReference>
<dbReference type="CDD" id="cd16259">
    <property type="entry name" value="RF3_III"/>
    <property type="match status" value="1"/>
</dbReference>
<dbReference type="FunFam" id="2.40.30.10:FF:000040">
    <property type="entry name" value="Peptide chain release factor 3"/>
    <property type="match status" value="1"/>
</dbReference>
<dbReference type="FunFam" id="3.30.70.3280:FF:000001">
    <property type="entry name" value="Peptide chain release factor 3"/>
    <property type="match status" value="1"/>
</dbReference>
<dbReference type="FunFam" id="3.40.50.300:FF:000542">
    <property type="entry name" value="Peptide chain release factor 3"/>
    <property type="match status" value="1"/>
</dbReference>
<dbReference type="Gene3D" id="3.40.50.300">
    <property type="entry name" value="P-loop containing nucleotide triphosphate hydrolases"/>
    <property type="match status" value="2"/>
</dbReference>
<dbReference type="Gene3D" id="3.30.70.3280">
    <property type="entry name" value="Peptide chain release factor 3, domain III"/>
    <property type="match status" value="1"/>
</dbReference>
<dbReference type="HAMAP" id="MF_00072">
    <property type="entry name" value="Rel_fac_3"/>
    <property type="match status" value="1"/>
</dbReference>
<dbReference type="InterPro" id="IPR053905">
    <property type="entry name" value="EF-G-like_DII"/>
</dbReference>
<dbReference type="InterPro" id="IPR035647">
    <property type="entry name" value="EFG_III/V"/>
</dbReference>
<dbReference type="InterPro" id="IPR031157">
    <property type="entry name" value="G_TR_CS"/>
</dbReference>
<dbReference type="InterPro" id="IPR027417">
    <property type="entry name" value="P-loop_NTPase"/>
</dbReference>
<dbReference type="InterPro" id="IPR004548">
    <property type="entry name" value="PrfC"/>
</dbReference>
<dbReference type="InterPro" id="IPR032090">
    <property type="entry name" value="RF3_C"/>
</dbReference>
<dbReference type="InterPro" id="IPR038467">
    <property type="entry name" value="RF3_dom_3_sf"/>
</dbReference>
<dbReference type="InterPro" id="IPR041732">
    <property type="entry name" value="RF3_GTP-bd"/>
</dbReference>
<dbReference type="InterPro" id="IPR005225">
    <property type="entry name" value="Small_GTP-bd"/>
</dbReference>
<dbReference type="InterPro" id="IPR000795">
    <property type="entry name" value="T_Tr_GTP-bd_dom"/>
</dbReference>
<dbReference type="InterPro" id="IPR009000">
    <property type="entry name" value="Transl_B-barrel_sf"/>
</dbReference>
<dbReference type="NCBIfam" id="TIGR00503">
    <property type="entry name" value="prfC"/>
    <property type="match status" value="1"/>
</dbReference>
<dbReference type="NCBIfam" id="NF001964">
    <property type="entry name" value="PRK00741.1"/>
    <property type="match status" value="1"/>
</dbReference>
<dbReference type="NCBIfam" id="TIGR00231">
    <property type="entry name" value="small_GTP"/>
    <property type="match status" value="1"/>
</dbReference>
<dbReference type="PANTHER" id="PTHR43556">
    <property type="entry name" value="PEPTIDE CHAIN RELEASE FACTOR RF3"/>
    <property type="match status" value="1"/>
</dbReference>
<dbReference type="PANTHER" id="PTHR43556:SF2">
    <property type="entry name" value="PEPTIDE CHAIN RELEASE FACTOR RF3"/>
    <property type="match status" value="1"/>
</dbReference>
<dbReference type="Pfam" id="PF22042">
    <property type="entry name" value="EF-G_D2"/>
    <property type="match status" value="1"/>
</dbReference>
<dbReference type="Pfam" id="PF00009">
    <property type="entry name" value="GTP_EFTU"/>
    <property type="match status" value="1"/>
</dbReference>
<dbReference type="Pfam" id="PF16658">
    <property type="entry name" value="RF3_C"/>
    <property type="match status" value="1"/>
</dbReference>
<dbReference type="PRINTS" id="PR00315">
    <property type="entry name" value="ELONGATNFCT"/>
</dbReference>
<dbReference type="SUPFAM" id="SSF54980">
    <property type="entry name" value="EF-G C-terminal domain-like"/>
    <property type="match status" value="1"/>
</dbReference>
<dbReference type="SUPFAM" id="SSF52540">
    <property type="entry name" value="P-loop containing nucleoside triphosphate hydrolases"/>
    <property type="match status" value="1"/>
</dbReference>
<dbReference type="SUPFAM" id="SSF50447">
    <property type="entry name" value="Translation proteins"/>
    <property type="match status" value="1"/>
</dbReference>
<dbReference type="PROSITE" id="PS00301">
    <property type="entry name" value="G_TR_1"/>
    <property type="match status" value="1"/>
</dbReference>
<dbReference type="PROSITE" id="PS51722">
    <property type="entry name" value="G_TR_2"/>
    <property type="match status" value="1"/>
</dbReference>
<protein>
    <recommendedName>
        <fullName evidence="1">Peptide chain release factor 3</fullName>
        <shortName evidence="1">RF-3</shortName>
    </recommendedName>
</protein>
<keyword id="KW-0963">Cytoplasm</keyword>
<keyword id="KW-0342">GTP-binding</keyword>
<keyword id="KW-0547">Nucleotide-binding</keyword>
<keyword id="KW-0648">Protein biosynthesis</keyword>